<keyword id="KW-0067">ATP-binding</keyword>
<keyword id="KW-1003">Cell membrane</keyword>
<keyword id="KW-0472">Membrane</keyword>
<keyword id="KW-0547">Nucleotide-binding</keyword>
<keyword id="KW-1278">Translocase</keyword>
<keyword id="KW-0813">Transport</keyword>
<accession>Q74L61</accession>
<gene>
    <name evidence="1" type="primary">ecfA2</name>
    <name type="synonym">cbiO2</name>
    <name type="ordered locus">LJ_0364</name>
</gene>
<feature type="chain" id="PRO_0000092017" description="Energy-coupling factor transporter ATP-binding protein EcfA2">
    <location>
        <begin position="1"/>
        <end position="289"/>
    </location>
</feature>
<feature type="domain" description="ABC transporter" evidence="1">
    <location>
        <begin position="3"/>
        <end position="245"/>
    </location>
</feature>
<feature type="binding site" evidence="1">
    <location>
        <begin position="40"/>
        <end position="47"/>
    </location>
    <ligand>
        <name>ATP</name>
        <dbReference type="ChEBI" id="CHEBI:30616"/>
    </ligand>
</feature>
<proteinExistence type="inferred from homology"/>
<organism>
    <name type="scientific">Lactobacillus johnsonii (strain CNCM I-12250 / La1 / NCC 533)</name>
    <dbReference type="NCBI Taxonomy" id="257314"/>
    <lineage>
        <taxon>Bacteria</taxon>
        <taxon>Bacillati</taxon>
        <taxon>Bacillota</taxon>
        <taxon>Bacilli</taxon>
        <taxon>Lactobacillales</taxon>
        <taxon>Lactobacillaceae</taxon>
        <taxon>Lactobacillus</taxon>
    </lineage>
</organism>
<dbReference type="EC" id="7.-.-.-" evidence="1"/>
<dbReference type="EMBL" id="AE017198">
    <property type="protein sequence ID" value="AAS08354.1"/>
    <property type="molecule type" value="Genomic_DNA"/>
</dbReference>
<dbReference type="RefSeq" id="WP_011161525.1">
    <property type="nucleotide sequence ID" value="NC_005362.1"/>
</dbReference>
<dbReference type="SMR" id="Q74L61"/>
<dbReference type="KEGG" id="ljo:LJ_0364"/>
<dbReference type="PATRIC" id="fig|257314.6.peg.386"/>
<dbReference type="eggNOG" id="COG1122">
    <property type="taxonomic scope" value="Bacteria"/>
</dbReference>
<dbReference type="HOGENOM" id="CLU_000604_1_22_9"/>
<dbReference type="Proteomes" id="UP000000581">
    <property type="component" value="Chromosome"/>
</dbReference>
<dbReference type="GO" id="GO:0043190">
    <property type="term" value="C:ATP-binding cassette (ABC) transporter complex"/>
    <property type="evidence" value="ECO:0007669"/>
    <property type="project" value="TreeGrafter"/>
</dbReference>
<dbReference type="GO" id="GO:0005524">
    <property type="term" value="F:ATP binding"/>
    <property type="evidence" value="ECO:0007669"/>
    <property type="project" value="UniProtKB-KW"/>
</dbReference>
<dbReference type="GO" id="GO:0016887">
    <property type="term" value="F:ATP hydrolysis activity"/>
    <property type="evidence" value="ECO:0007669"/>
    <property type="project" value="InterPro"/>
</dbReference>
<dbReference type="GO" id="GO:0042626">
    <property type="term" value="F:ATPase-coupled transmembrane transporter activity"/>
    <property type="evidence" value="ECO:0007669"/>
    <property type="project" value="TreeGrafter"/>
</dbReference>
<dbReference type="CDD" id="cd03225">
    <property type="entry name" value="ABC_cobalt_CbiO_domain1"/>
    <property type="match status" value="1"/>
</dbReference>
<dbReference type="FunFam" id="3.40.50.300:FF:000224">
    <property type="entry name" value="Energy-coupling factor transporter ATP-binding protein EcfA"/>
    <property type="match status" value="1"/>
</dbReference>
<dbReference type="Gene3D" id="3.40.50.300">
    <property type="entry name" value="P-loop containing nucleotide triphosphate hydrolases"/>
    <property type="match status" value="1"/>
</dbReference>
<dbReference type="InterPro" id="IPR003593">
    <property type="entry name" value="AAA+_ATPase"/>
</dbReference>
<dbReference type="InterPro" id="IPR003439">
    <property type="entry name" value="ABC_transporter-like_ATP-bd"/>
</dbReference>
<dbReference type="InterPro" id="IPR017871">
    <property type="entry name" value="ABC_transporter-like_CS"/>
</dbReference>
<dbReference type="InterPro" id="IPR015856">
    <property type="entry name" value="ABC_transpr_CbiO/EcfA_su"/>
</dbReference>
<dbReference type="InterPro" id="IPR050095">
    <property type="entry name" value="ECF_ABC_transporter_ATP-bd"/>
</dbReference>
<dbReference type="InterPro" id="IPR030946">
    <property type="entry name" value="EcfA2"/>
</dbReference>
<dbReference type="InterPro" id="IPR027417">
    <property type="entry name" value="P-loop_NTPase"/>
</dbReference>
<dbReference type="NCBIfam" id="TIGR04521">
    <property type="entry name" value="ECF_ATPase_2"/>
    <property type="match status" value="1"/>
</dbReference>
<dbReference type="PANTHER" id="PTHR43553:SF27">
    <property type="entry name" value="ENERGY-COUPLING FACTOR TRANSPORTER ATP-BINDING PROTEIN ECFA2"/>
    <property type="match status" value="1"/>
</dbReference>
<dbReference type="PANTHER" id="PTHR43553">
    <property type="entry name" value="HEAVY METAL TRANSPORTER"/>
    <property type="match status" value="1"/>
</dbReference>
<dbReference type="Pfam" id="PF00005">
    <property type="entry name" value="ABC_tran"/>
    <property type="match status" value="1"/>
</dbReference>
<dbReference type="SMART" id="SM00382">
    <property type="entry name" value="AAA"/>
    <property type="match status" value="1"/>
</dbReference>
<dbReference type="SUPFAM" id="SSF52540">
    <property type="entry name" value="P-loop containing nucleoside triphosphate hydrolases"/>
    <property type="match status" value="1"/>
</dbReference>
<dbReference type="PROSITE" id="PS00211">
    <property type="entry name" value="ABC_TRANSPORTER_1"/>
    <property type="match status" value="1"/>
</dbReference>
<dbReference type="PROSITE" id="PS50893">
    <property type="entry name" value="ABC_TRANSPORTER_2"/>
    <property type="match status" value="1"/>
</dbReference>
<dbReference type="PROSITE" id="PS51246">
    <property type="entry name" value="CBIO"/>
    <property type="match status" value="1"/>
</dbReference>
<sequence>MSIEFKNVDYVYAPGTPFQTQGLIDISFKIEKGSFVAIAGHTGSGKSTLMQHFDGLLLPSKGEITVAGEQINANTSSKALKAIRKKVGLVFQFPENQLFEETVLKDVMFGPLNFGFSEQKAKEQAVEWIKKVGLSEDMMDKSPFELSGGQMRRVAIAGVMAYEPEILCLDEPAAGLDPEGQKQMFEIFKEYQRAGHTVILISHNMDDISEYADDMLVLDHGHLIKHASPQEIFSDQEWVKKHYLDEPATSRLTRELQKGGFQFSEMPLTIESLVSKVANELKKKGDMDE</sequence>
<reference key="1">
    <citation type="journal article" date="2004" name="Proc. Natl. Acad. Sci. U.S.A.">
        <title>The genome sequence of the probiotic intestinal bacterium Lactobacillus johnsonii NCC 533.</title>
        <authorList>
            <person name="Pridmore R.D."/>
            <person name="Berger B."/>
            <person name="Desiere F."/>
            <person name="Vilanova D."/>
            <person name="Barretto C."/>
            <person name="Pittet A.-C."/>
            <person name="Zwahlen M.-C."/>
            <person name="Rouvet M."/>
            <person name="Altermann E."/>
            <person name="Barrangou R."/>
            <person name="Mollet B."/>
            <person name="Mercenier A."/>
            <person name="Klaenhammer T."/>
            <person name="Arigoni F."/>
            <person name="Schell M.A."/>
        </authorList>
    </citation>
    <scope>NUCLEOTIDE SEQUENCE [LARGE SCALE GENOMIC DNA]</scope>
    <source>
        <strain>CNCM I-1225 / La1 / NCC 533</strain>
    </source>
</reference>
<evidence type="ECO:0000255" key="1">
    <source>
        <dbReference type="HAMAP-Rule" id="MF_01710"/>
    </source>
</evidence>
<comment type="function">
    <text evidence="1">ATP-binding (A) component of a common energy-coupling factor (ECF) ABC-transporter complex. Unlike classic ABC transporters this ECF transporter provides the energy necessary to transport a number of different substrates.</text>
</comment>
<comment type="subunit">
    <text evidence="1">Forms a stable energy-coupling factor (ECF) transporter complex composed of 2 membrane-embedded substrate-binding proteins (S component), 2 ATP-binding proteins (A component) and 2 transmembrane proteins (T component).</text>
</comment>
<comment type="subcellular location">
    <subcellularLocation>
        <location evidence="1">Cell membrane</location>
        <topology evidence="1">Peripheral membrane protein</topology>
    </subcellularLocation>
</comment>
<comment type="similarity">
    <text evidence="1">Belongs to the ABC transporter superfamily. Energy-coupling factor EcfA family.</text>
</comment>
<protein>
    <recommendedName>
        <fullName evidence="1">Energy-coupling factor transporter ATP-binding protein EcfA2</fullName>
        <shortName evidence="1">ECF transporter A component EcfA2</shortName>
        <ecNumber evidence="1">7.-.-.-</ecNumber>
    </recommendedName>
</protein>
<name>ECFA2_LACJO</name>